<gene>
    <name evidence="1" type="primary">ctaB</name>
    <name type="ordered locus">Achl_1839</name>
</gene>
<feature type="chain" id="PRO_1000199636" description="Protoheme IX farnesyltransferase">
    <location>
        <begin position="1"/>
        <end position="319"/>
    </location>
</feature>
<feature type="transmembrane region" description="Helical" evidence="1">
    <location>
        <begin position="59"/>
        <end position="79"/>
    </location>
</feature>
<feature type="transmembrane region" description="Helical" evidence="1">
    <location>
        <begin position="108"/>
        <end position="128"/>
    </location>
</feature>
<feature type="transmembrane region" description="Helical" evidence="1">
    <location>
        <begin position="131"/>
        <end position="151"/>
    </location>
</feature>
<feature type="transmembrane region" description="Helical" evidence="1">
    <location>
        <begin position="158"/>
        <end position="178"/>
    </location>
</feature>
<feature type="transmembrane region" description="Helical" evidence="1">
    <location>
        <begin position="183"/>
        <end position="203"/>
    </location>
</feature>
<feature type="transmembrane region" description="Helical" evidence="1">
    <location>
        <begin position="232"/>
        <end position="252"/>
    </location>
</feature>
<feature type="transmembrane region" description="Helical" evidence="1">
    <location>
        <begin position="254"/>
        <end position="274"/>
    </location>
</feature>
<feature type="transmembrane region" description="Helical" evidence="1">
    <location>
        <begin position="299"/>
        <end position="319"/>
    </location>
</feature>
<keyword id="KW-1003">Cell membrane</keyword>
<keyword id="KW-0350">Heme biosynthesis</keyword>
<keyword id="KW-0472">Membrane</keyword>
<keyword id="KW-0808">Transferase</keyword>
<keyword id="KW-0812">Transmembrane</keyword>
<keyword id="KW-1133">Transmembrane helix</keyword>
<evidence type="ECO:0000255" key="1">
    <source>
        <dbReference type="HAMAP-Rule" id="MF_00154"/>
    </source>
</evidence>
<accession>B8H7N5</accession>
<reference key="1">
    <citation type="submission" date="2009-01" db="EMBL/GenBank/DDBJ databases">
        <title>Complete sequence of chromosome of Arthrobacter chlorophenolicus A6.</title>
        <authorList>
            <consortium name="US DOE Joint Genome Institute"/>
            <person name="Lucas S."/>
            <person name="Copeland A."/>
            <person name="Lapidus A."/>
            <person name="Glavina del Rio T."/>
            <person name="Tice H."/>
            <person name="Bruce D."/>
            <person name="Goodwin L."/>
            <person name="Pitluck S."/>
            <person name="Goltsman E."/>
            <person name="Clum A."/>
            <person name="Larimer F."/>
            <person name="Land M."/>
            <person name="Hauser L."/>
            <person name="Kyrpides N."/>
            <person name="Mikhailova N."/>
            <person name="Jansson J."/>
            <person name="Richardson P."/>
        </authorList>
    </citation>
    <scope>NUCLEOTIDE SEQUENCE [LARGE SCALE GENOMIC DNA]</scope>
    <source>
        <strain>ATCC 700700 / DSM 12829 / CIP 107037 / JCM 12360 / KCTC 9906 / NCIMB 13794 / A6</strain>
    </source>
</reference>
<name>COXX_PSECP</name>
<sequence>MTATVSTTDTPLNASRASGPGFARKAKAYLALTKPRVIELLLVSTLPTMIYAERGFPSIGLILATLVGGAFAAGSAGAFNCYIDRDIDKLMARTENRPLVTGEVTPREALVFSWLLGAAAIAILWFGANPLSAWLGLGAIFFYVVIYTIILKRRTAQNIVWGGAAGCFPVLIAWAAVTNSVEWPAIILFMVIFLWTPPHYWPLSMRYGEDYRNAKVPMLGAIAGAKVVSVQVVLYAWAMVACSLLMVPAGGAGWVYTVTAVLAGAWFLYESHALYNRAQREDIPDKRAMKVFHGSISYLTLLFIALAVDPFVGPAVIGG</sequence>
<protein>
    <recommendedName>
        <fullName evidence="1">Protoheme IX farnesyltransferase</fullName>
        <ecNumber evidence="1">2.5.1.141</ecNumber>
    </recommendedName>
    <alternativeName>
        <fullName evidence="1">Heme B farnesyltransferase</fullName>
    </alternativeName>
    <alternativeName>
        <fullName evidence="1">Heme O synthase</fullName>
    </alternativeName>
</protein>
<dbReference type="EC" id="2.5.1.141" evidence="1"/>
<dbReference type="EMBL" id="CP001341">
    <property type="protein sequence ID" value="ACL39815.1"/>
    <property type="molecule type" value="Genomic_DNA"/>
</dbReference>
<dbReference type="RefSeq" id="WP_015937035.1">
    <property type="nucleotide sequence ID" value="NC_011886.1"/>
</dbReference>
<dbReference type="SMR" id="B8H7N5"/>
<dbReference type="STRING" id="452863.Achl_1839"/>
<dbReference type="KEGG" id="ach:Achl_1839"/>
<dbReference type="eggNOG" id="COG0109">
    <property type="taxonomic scope" value="Bacteria"/>
</dbReference>
<dbReference type="HOGENOM" id="CLU_029631_0_1_11"/>
<dbReference type="OrthoDB" id="9814417at2"/>
<dbReference type="UniPathway" id="UPA00834">
    <property type="reaction ID" value="UER00712"/>
</dbReference>
<dbReference type="Proteomes" id="UP000002505">
    <property type="component" value="Chromosome"/>
</dbReference>
<dbReference type="GO" id="GO:0005886">
    <property type="term" value="C:plasma membrane"/>
    <property type="evidence" value="ECO:0007669"/>
    <property type="project" value="UniProtKB-SubCell"/>
</dbReference>
<dbReference type="GO" id="GO:0008495">
    <property type="term" value="F:protoheme IX farnesyltransferase activity"/>
    <property type="evidence" value="ECO:0007669"/>
    <property type="project" value="UniProtKB-UniRule"/>
</dbReference>
<dbReference type="GO" id="GO:0048034">
    <property type="term" value="P:heme O biosynthetic process"/>
    <property type="evidence" value="ECO:0007669"/>
    <property type="project" value="UniProtKB-UniRule"/>
</dbReference>
<dbReference type="CDD" id="cd13957">
    <property type="entry name" value="PT_UbiA_Cox10"/>
    <property type="match status" value="1"/>
</dbReference>
<dbReference type="FunFam" id="1.10.357.140:FF:000001">
    <property type="entry name" value="Protoheme IX farnesyltransferase"/>
    <property type="match status" value="1"/>
</dbReference>
<dbReference type="Gene3D" id="1.10.357.140">
    <property type="entry name" value="UbiA prenyltransferase"/>
    <property type="match status" value="1"/>
</dbReference>
<dbReference type="HAMAP" id="MF_00154">
    <property type="entry name" value="CyoE_CtaB"/>
    <property type="match status" value="1"/>
</dbReference>
<dbReference type="InterPro" id="IPR006369">
    <property type="entry name" value="Protohaem_IX_farnesylTrfase"/>
</dbReference>
<dbReference type="InterPro" id="IPR000537">
    <property type="entry name" value="UbiA_prenyltransferase"/>
</dbReference>
<dbReference type="InterPro" id="IPR030470">
    <property type="entry name" value="UbiA_prenylTrfase_CS"/>
</dbReference>
<dbReference type="InterPro" id="IPR044878">
    <property type="entry name" value="UbiA_sf"/>
</dbReference>
<dbReference type="NCBIfam" id="TIGR01473">
    <property type="entry name" value="cyoE_ctaB"/>
    <property type="match status" value="1"/>
</dbReference>
<dbReference type="NCBIfam" id="NF003349">
    <property type="entry name" value="PRK04375.1-2"/>
    <property type="match status" value="1"/>
</dbReference>
<dbReference type="PANTHER" id="PTHR43448:SF7">
    <property type="entry name" value="4-HYDROXYBENZOATE SOLANESYLTRANSFERASE"/>
    <property type="match status" value="1"/>
</dbReference>
<dbReference type="PANTHER" id="PTHR43448">
    <property type="entry name" value="PROTOHEME IX FARNESYLTRANSFERASE, MITOCHONDRIAL"/>
    <property type="match status" value="1"/>
</dbReference>
<dbReference type="Pfam" id="PF01040">
    <property type="entry name" value="UbiA"/>
    <property type="match status" value="1"/>
</dbReference>
<dbReference type="PROSITE" id="PS00943">
    <property type="entry name" value="UBIA"/>
    <property type="match status" value="1"/>
</dbReference>
<organism>
    <name type="scientific">Pseudarthrobacter chlorophenolicus (strain ATCC 700700 / DSM 12829 / CIP 107037 / JCM 12360 / KCTC 9906 / NCIMB 13794 / A6)</name>
    <name type="common">Arthrobacter chlorophenolicus</name>
    <dbReference type="NCBI Taxonomy" id="452863"/>
    <lineage>
        <taxon>Bacteria</taxon>
        <taxon>Bacillati</taxon>
        <taxon>Actinomycetota</taxon>
        <taxon>Actinomycetes</taxon>
        <taxon>Micrococcales</taxon>
        <taxon>Micrococcaceae</taxon>
        <taxon>Pseudarthrobacter</taxon>
    </lineage>
</organism>
<proteinExistence type="inferred from homology"/>
<comment type="function">
    <text evidence="1">Converts heme B (protoheme IX) to heme O by substitution of the vinyl group on carbon 2 of heme B porphyrin ring with a hydroxyethyl farnesyl side group.</text>
</comment>
<comment type="catalytic activity">
    <reaction evidence="1">
        <text>heme b + (2E,6E)-farnesyl diphosphate + H2O = Fe(II)-heme o + diphosphate</text>
        <dbReference type="Rhea" id="RHEA:28070"/>
        <dbReference type="ChEBI" id="CHEBI:15377"/>
        <dbReference type="ChEBI" id="CHEBI:33019"/>
        <dbReference type="ChEBI" id="CHEBI:60344"/>
        <dbReference type="ChEBI" id="CHEBI:60530"/>
        <dbReference type="ChEBI" id="CHEBI:175763"/>
        <dbReference type="EC" id="2.5.1.141"/>
    </reaction>
</comment>
<comment type="pathway">
    <text evidence="1">Porphyrin-containing compound metabolism; heme O biosynthesis; heme O from protoheme: step 1/1.</text>
</comment>
<comment type="subcellular location">
    <subcellularLocation>
        <location evidence="1">Cell membrane</location>
        <topology evidence="1">Multi-pass membrane protein</topology>
    </subcellularLocation>
</comment>
<comment type="miscellaneous">
    <text evidence="1">Carbon 2 of the heme B porphyrin ring is defined according to the Fischer nomenclature.</text>
</comment>
<comment type="similarity">
    <text evidence="1">Belongs to the UbiA prenyltransferase family. Protoheme IX farnesyltransferase subfamily.</text>
</comment>